<gene>
    <name evidence="1" type="primary">htpG</name>
    <name type="ordered locus">PSHAa1207</name>
</gene>
<name>HTPG_PSET1</name>
<sequence length="637" mass="72502">MTAAQKETLGFQTEVKQLLNLMIHSLYSNKEIFLRELVSNASDAADKLRFLALSQGDLYQGDADLRVRISADKEANTITISDNGIGMTRDEVISSLGTIAKSGTAEFFKNLTGDQSKDSQLIGQFGVGFYSAFIVADLVTVRTRKAGETTAYEWESQGEGEYTLQEIEKEGRGTDIILHLREEEKEFADEWRLRSIVTKYSDHISTPVQMYKAEVPESEGEDGEKIPAVPGEWESINRATALWTRDKSELSDDEYKEFYKHVSLDWEDPLSWAHNKVEGKTEYTSLLYIPKKAPFDLWNRDRQSGLKLYVQRVFIMDDAEQFMPSYLRFVKGLLDSNDLPLNVSREILQDNKVTQAIRKGCTSRIIKMLERMAKNKADDYQVFWNEFGQVIKEGPAEDAANKEAICKLLRFSSTHTDSATQDVSLEQYVERMNEGQEKIYYVVADTFTAAKNSPHLEIFRKKGIEVLLLSDRVDEWMMSHLTEFADKQLQSITRGDLDLGKLDDEETKKAQEESEKEVAGLVERIKTALGDEVKEVRFTHRLTDSPACVVSDDNDMSSQMQKLMESVGQAAPEAKPVFELNPEHQLVKHLNDEQDEDKFAQWSHVLLDQALLAERGTLKDPTGFVTRLNKLMLELSK</sequence>
<feature type="chain" id="PRO_0000224221" description="Chaperone protein HtpG">
    <location>
        <begin position="1"/>
        <end position="637"/>
    </location>
</feature>
<feature type="region of interest" description="A; substrate-binding" evidence="1">
    <location>
        <begin position="1"/>
        <end position="345"/>
    </location>
</feature>
<feature type="region of interest" description="B" evidence="1">
    <location>
        <begin position="346"/>
        <end position="562"/>
    </location>
</feature>
<feature type="region of interest" description="C" evidence="1">
    <location>
        <begin position="563"/>
        <end position="637"/>
    </location>
</feature>
<evidence type="ECO:0000255" key="1">
    <source>
        <dbReference type="HAMAP-Rule" id="MF_00505"/>
    </source>
</evidence>
<dbReference type="EMBL" id="CR954246">
    <property type="protein sequence ID" value="CAI86282.1"/>
    <property type="molecule type" value="Genomic_DNA"/>
</dbReference>
<dbReference type="SMR" id="Q3IKQ2"/>
<dbReference type="STRING" id="326442.PSHAa1207"/>
<dbReference type="KEGG" id="pha:PSHAa1207"/>
<dbReference type="PATRIC" id="fig|326442.8.peg.1161"/>
<dbReference type="eggNOG" id="COG0326">
    <property type="taxonomic scope" value="Bacteria"/>
</dbReference>
<dbReference type="HOGENOM" id="CLU_006684_3_0_6"/>
<dbReference type="BioCyc" id="PHAL326442:PSHA_RS05955-MONOMER"/>
<dbReference type="Proteomes" id="UP000006843">
    <property type="component" value="Chromosome I"/>
</dbReference>
<dbReference type="GO" id="GO:0005737">
    <property type="term" value="C:cytoplasm"/>
    <property type="evidence" value="ECO:0007669"/>
    <property type="project" value="UniProtKB-SubCell"/>
</dbReference>
<dbReference type="GO" id="GO:0005524">
    <property type="term" value="F:ATP binding"/>
    <property type="evidence" value="ECO:0007669"/>
    <property type="project" value="UniProtKB-UniRule"/>
</dbReference>
<dbReference type="GO" id="GO:0016887">
    <property type="term" value="F:ATP hydrolysis activity"/>
    <property type="evidence" value="ECO:0007669"/>
    <property type="project" value="InterPro"/>
</dbReference>
<dbReference type="GO" id="GO:0140662">
    <property type="term" value="F:ATP-dependent protein folding chaperone"/>
    <property type="evidence" value="ECO:0007669"/>
    <property type="project" value="InterPro"/>
</dbReference>
<dbReference type="GO" id="GO:0051082">
    <property type="term" value="F:unfolded protein binding"/>
    <property type="evidence" value="ECO:0007669"/>
    <property type="project" value="UniProtKB-UniRule"/>
</dbReference>
<dbReference type="CDD" id="cd16927">
    <property type="entry name" value="HATPase_Hsp90-like"/>
    <property type="match status" value="1"/>
</dbReference>
<dbReference type="FunFam" id="3.30.230.80:FF:000002">
    <property type="entry name" value="Molecular chaperone HtpG"/>
    <property type="match status" value="1"/>
</dbReference>
<dbReference type="FunFam" id="3.30.565.10:FF:000009">
    <property type="entry name" value="Molecular chaperone HtpG"/>
    <property type="match status" value="1"/>
</dbReference>
<dbReference type="Gene3D" id="3.30.230.80">
    <property type="match status" value="1"/>
</dbReference>
<dbReference type="Gene3D" id="3.40.50.11260">
    <property type="match status" value="1"/>
</dbReference>
<dbReference type="Gene3D" id="1.20.120.790">
    <property type="entry name" value="Heat shock protein 90, C-terminal domain"/>
    <property type="match status" value="1"/>
</dbReference>
<dbReference type="Gene3D" id="3.30.565.10">
    <property type="entry name" value="Histidine kinase-like ATPase, C-terminal domain"/>
    <property type="match status" value="1"/>
</dbReference>
<dbReference type="HAMAP" id="MF_00505">
    <property type="entry name" value="HSP90"/>
    <property type="match status" value="1"/>
</dbReference>
<dbReference type="InterPro" id="IPR036890">
    <property type="entry name" value="HATPase_C_sf"/>
</dbReference>
<dbReference type="InterPro" id="IPR019805">
    <property type="entry name" value="Heat_shock_protein_90_CS"/>
</dbReference>
<dbReference type="InterPro" id="IPR037196">
    <property type="entry name" value="HSP90_C"/>
</dbReference>
<dbReference type="InterPro" id="IPR001404">
    <property type="entry name" value="Hsp90_fam"/>
</dbReference>
<dbReference type="InterPro" id="IPR020575">
    <property type="entry name" value="Hsp90_N"/>
</dbReference>
<dbReference type="InterPro" id="IPR020568">
    <property type="entry name" value="Ribosomal_Su5_D2-typ_SF"/>
</dbReference>
<dbReference type="NCBIfam" id="NF003555">
    <property type="entry name" value="PRK05218.1"/>
    <property type="match status" value="1"/>
</dbReference>
<dbReference type="PANTHER" id="PTHR11528">
    <property type="entry name" value="HEAT SHOCK PROTEIN 90 FAMILY MEMBER"/>
    <property type="match status" value="1"/>
</dbReference>
<dbReference type="Pfam" id="PF13589">
    <property type="entry name" value="HATPase_c_3"/>
    <property type="match status" value="1"/>
</dbReference>
<dbReference type="Pfam" id="PF00183">
    <property type="entry name" value="HSP90"/>
    <property type="match status" value="1"/>
</dbReference>
<dbReference type="PIRSF" id="PIRSF002583">
    <property type="entry name" value="Hsp90"/>
    <property type="match status" value="1"/>
</dbReference>
<dbReference type="PRINTS" id="PR00775">
    <property type="entry name" value="HEATSHOCK90"/>
</dbReference>
<dbReference type="SMART" id="SM00387">
    <property type="entry name" value="HATPase_c"/>
    <property type="match status" value="1"/>
</dbReference>
<dbReference type="SUPFAM" id="SSF55874">
    <property type="entry name" value="ATPase domain of HSP90 chaperone/DNA topoisomerase II/histidine kinase"/>
    <property type="match status" value="1"/>
</dbReference>
<dbReference type="SUPFAM" id="SSF110942">
    <property type="entry name" value="HSP90 C-terminal domain"/>
    <property type="match status" value="1"/>
</dbReference>
<dbReference type="SUPFAM" id="SSF54211">
    <property type="entry name" value="Ribosomal protein S5 domain 2-like"/>
    <property type="match status" value="1"/>
</dbReference>
<dbReference type="PROSITE" id="PS00298">
    <property type="entry name" value="HSP90"/>
    <property type="match status" value="1"/>
</dbReference>
<accession>Q3IKQ2</accession>
<protein>
    <recommendedName>
        <fullName evidence="1">Chaperone protein HtpG</fullName>
    </recommendedName>
    <alternativeName>
        <fullName evidence="1">Heat shock protein HtpG</fullName>
    </alternativeName>
    <alternativeName>
        <fullName evidence="1">High temperature protein G</fullName>
    </alternativeName>
</protein>
<reference key="1">
    <citation type="journal article" date="2005" name="Genome Res.">
        <title>Coping with cold: the genome of the versatile marine Antarctica bacterium Pseudoalteromonas haloplanktis TAC125.</title>
        <authorList>
            <person name="Medigue C."/>
            <person name="Krin E."/>
            <person name="Pascal G."/>
            <person name="Barbe V."/>
            <person name="Bernsel A."/>
            <person name="Bertin P.N."/>
            <person name="Cheung F."/>
            <person name="Cruveiller S."/>
            <person name="D'Amico S."/>
            <person name="Duilio A."/>
            <person name="Fang G."/>
            <person name="Feller G."/>
            <person name="Ho C."/>
            <person name="Mangenot S."/>
            <person name="Marino G."/>
            <person name="Nilsson J."/>
            <person name="Parrilli E."/>
            <person name="Rocha E.P.C."/>
            <person name="Rouy Z."/>
            <person name="Sekowska A."/>
            <person name="Tutino M.L."/>
            <person name="Vallenet D."/>
            <person name="von Heijne G."/>
            <person name="Danchin A."/>
        </authorList>
    </citation>
    <scope>NUCLEOTIDE SEQUENCE [LARGE SCALE GENOMIC DNA]</scope>
    <source>
        <strain>TAC 125</strain>
    </source>
</reference>
<organism>
    <name type="scientific">Pseudoalteromonas translucida (strain TAC 125)</name>
    <dbReference type="NCBI Taxonomy" id="326442"/>
    <lineage>
        <taxon>Bacteria</taxon>
        <taxon>Pseudomonadati</taxon>
        <taxon>Pseudomonadota</taxon>
        <taxon>Gammaproteobacteria</taxon>
        <taxon>Alteromonadales</taxon>
        <taxon>Pseudoalteromonadaceae</taxon>
        <taxon>Pseudoalteromonas</taxon>
    </lineage>
</organism>
<comment type="function">
    <text evidence="1">Molecular chaperone. Has ATPase activity.</text>
</comment>
<comment type="subunit">
    <text evidence="1">Homodimer.</text>
</comment>
<comment type="subcellular location">
    <subcellularLocation>
        <location evidence="1">Cytoplasm</location>
    </subcellularLocation>
</comment>
<comment type="similarity">
    <text evidence="1">Belongs to the heat shock protein 90 family.</text>
</comment>
<proteinExistence type="inferred from homology"/>
<keyword id="KW-0067">ATP-binding</keyword>
<keyword id="KW-0143">Chaperone</keyword>
<keyword id="KW-0963">Cytoplasm</keyword>
<keyword id="KW-0547">Nucleotide-binding</keyword>
<keyword id="KW-1185">Reference proteome</keyword>
<keyword id="KW-0346">Stress response</keyword>